<sequence length="446" mass="50642">MNALKYFSNHLITTKKQKKINVEVTKNQDLLGPSKEVSNKYTSHSENDCVSEVDQQYDHSSSHLKESDQNQERKNSVPKKPKALRSILIEKIASILWALLLFLPYYLIIKPLMSLWFVFTFPLSVIERRVKHTDKRNRGSNASENELPVSSSNINDSSEKTNPKNCNLNTIPEAVEDDLNASDEIILQRDNVKGSLLRAQSVKSRPRSYSKSELSLSNHSSSNTVFGTKRMGRFLFPKKLIPKSVLNTQKKKKLVIDLDETLIHSASRSTTHSNSSQGHLVEVKFGLSGIRTLYFIHKRPYCDLFLTKVSKWYDLIIFTASMKEYADPVIDWLESSFPSSFSKRYYRSDCVLRDGVGYIKDLSIVKDSEENGKGSSSSLDDVIIIDNSPVSYAMNVDNAIQVEGWISDPTDTDLLNLLPFLEAMRYSTDVRNILALKHGEKAFNIN</sequence>
<feature type="chain" id="PRO_0000212579" description="Nuclear envelope morphology protein 1">
    <location>
        <begin position="1"/>
        <end position="446"/>
    </location>
</feature>
<feature type="transmembrane region" description="Helical" evidence="1">
    <location>
        <begin position="87"/>
        <end position="103"/>
    </location>
</feature>
<feature type="domain" description="FCP1 homology" evidence="2">
    <location>
        <begin position="247"/>
        <end position="424"/>
    </location>
</feature>
<feature type="region of interest" description="Disordered" evidence="3">
    <location>
        <begin position="53"/>
        <end position="80"/>
    </location>
</feature>
<feature type="region of interest" description="Disordered" evidence="3">
    <location>
        <begin position="132"/>
        <end position="168"/>
    </location>
</feature>
<feature type="compositionally biased region" description="Basic and acidic residues" evidence="3">
    <location>
        <begin position="56"/>
        <end position="75"/>
    </location>
</feature>
<feature type="compositionally biased region" description="Polar residues" evidence="3">
    <location>
        <begin position="139"/>
        <end position="156"/>
    </location>
</feature>
<feature type="mutagenesis site" description="Abolishes phosphatase activity." evidence="5">
    <original>D</original>
    <variation>A</variation>
    <location>
        <position position="257"/>
    </location>
</feature>
<protein>
    <recommendedName>
        <fullName>Nuclear envelope morphology protein 1</fullName>
        <ecNumber>3.1.3.16</ecNumber>
    </recommendedName>
</protein>
<reference key="1">
    <citation type="journal article" date="1994" name="Science">
        <title>Complete nucleotide sequence of Saccharomyces cerevisiae chromosome VIII.</title>
        <authorList>
            <person name="Johnston M."/>
            <person name="Andrews S."/>
            <person name="Brinkman R."/>
            <person name="Cooper J."/>
            <person name="Ding H."/>
            <person name="Dover J."/>
            <person name="Du Z."/>
            <person name="Favello A."/>
            <person name="Fulton L."/>
            <person name="Gattung S."/>
            <person name="Geisel C."/>
            <person name="Kirsten J."/>
            <person name="Kucaba T."/>
            <person name="Hillier L.W."/>
            <person name="Jier M."/>
            <person name="Johnston L."/>
            <person name="Langston Y."/>
            <person name="Latreille P."/>
            <person name="Louis E.J."/>
            <person name="Macri C."/>
            <person name="Mardis E."/>
            <person name="Menezes S."/>
            <person name="Mouser L."/>
            <person name="Nhan M."/>
            <person name="Rifkin L."/>
            <person name="Riles L."/>
            <person name="St Peter H."/>
            <person name="Trevaskis E."/>
            <person name="Vaughan K."/>
            <person name="Vignati D."/>
            <person name="Wilcox L."/>
            <person name="Wohldman P."/>
            <person name="Waterston R."/>
            <person name="Wilson R."/>
            <person name="Vaudin M."/>
        </authorList>
    </citation>
    <scope>NUCLEOTIDE SEQUENCE [LARGE SCALE GENOMIC DNA]</scope>
    <source>
        <strain>ATCC 204508 / S288c</strain>
    </source>
</reference>
<reference key="2">
    <citation type="journal article" date="2014" name="G3 (Bethesda)">
        <title>The reference genome sequence of Saccharomyces cerevisiae: Then and now.</title>
        <authorList>
            <person name="Engel S.R."/>
            <person name="Dietrich F.S."/>
            <person name="Fisk D.G."/>
            <person name="Binkley G."/>
            <person name="Balakrishnan R."/>
            <person name="Costanzo M.C."/>
            <person name="Dwight S.S."/>
            <person name="Hitz B.C."/>
            <person name="Karra K."/>
            <person name="Nash R.S."/>
            <person name="Weng S."/>
            <person name="Wong E.D."/>
            <person name="Lloyd P."/>
            <person name="Skrzypek M.S."/>
            <person name="Miyasato S.R."/>
            <person name="Simison M."/>
            <person name="Cherry J.M."/>
        </authorList>
    </citation>
    <scope>GENOME REANNOTATION</scope>
    <source>
        <strain>ATCC 204508 / S288c</strain>
    </source>
</reference>
<reference key="3">
    <citation type="journal article" date="2007" name="Genome Res.">
        <title>Approaching a complete repository of sequence-verified protein-encoding clones for Saccharomyces cerevisiae.</title>
        <authorList>
            <person name="Hu Y."/>
            <person name="Rolfs A."/>
            <person name="Bhullar B."/>
            <person name="Murthy T.V.S."/>
            <person name="Zhu C."/>
            <person name="Berger M.F."/>
            <person name="Camargo A.A."/>
            <person name="Kelley F."/>
            <person name="McCarron S."/>
            <person name="Jepson D."/>
            <person name="Richardson A."/>
            <person name="Raphael J."/>
            <person name="Moreira D."/>
            <person name="Taycher E."/>
            <person name="Zuo D."/>
            <person name="Mohr S."/>
            <person name="Kane M.F."/>
            <person name="Williamson J."/>
            <person name="Simpson A.J.G."/>
            <person name="Bulyk M.L."/>
            <person name="Harlow E."/>
            <person name="Marsischky G."/>
            <person name="Kolodner R.D."/>
            <person name="LaBaer J."/>
        </authorList>
    </citation>
    <scope>NUCLEOTIDE SEQUENCE [GENOMIC DNA]</scope>
    <source>
        <strain>ATCC 204508 / S288c</strain>
    </source>
</reference>
<reference key="4">
    <citation type="journal article" date="1998" name="EMBO J.">
        <title>A novel complex of membrane proteins required for formation of a spherical nucleus.</title>
        <authorList>
            <person name="Siniossoglou S."/>
            <person name="Santos-Rosa H."/>
            <person name="Rappsilber J."/>
            <person name="Mann M."/>
            <person name="Hurt E."/>
        </authorList>
    </citation>
    <scope>FUNCTION</scope>
    <scope>IDENTIFICATION IN THE NEM1-SPO7 COMPLEX</scope>
    <scope>SUBCELLULAR LOCATION</scope>
</reference>
<reference key="5">
    <citation type="journal article" date="2003" name="Nature">
        <title>Global analysis of protein expression in yeast.</title>
        <authorList>
            <person name="Ghaemmaghami S."/>
            <person name="Huh W.-K."/>
            <person name="Bower K."/>
            <person name="Howson R.W."/>
            <person name="Belle A."/>
            <person name="Dephoure N."/>
            <person name="O'Shea E.K."/>
            <person name="Weissman J.S."/>
        </authorList>
    </citation>
    <scope>LEVEL OF PROTEIN EXPRESSION [LARGE SCALE ANALYSIS]</scope>
</reference>
<reference key="6">
    <citation type="journal article" date="2005" name="EMBO J.">
        <title>The yeast lipin Smp2 couples phospholipid biosynthesis to nuclear membrane growth.</title>
        <authorList>
            <person name="Santos-Rosa H."/>
            <person name="Leung J."/>
            <person name="Grimsey N."/>
            <person name="Peak-Chew S."/>
            <person name="Siniossoglou S."/>
        </authorList>
    </citation>
    <scope>FUNCTION OF THE NEM1-SPO7 COMPLEX</scope>
    <scope>MUTAGENESIS OF ASP-257</scope>
</reference>
<reference key="7">
    <citation type="journal article" date="2018" name="Biochem. Biophys. Res. Commun.">
        <title>The Nem1-Spo7 protein phosphatase complex is required for efficient mitophagy in yeast.</title>
        <authorList>
            <person name="Xu X."/>
            <person name="Okamoto K."/>
        </authorList>
    </citation>
    <scope>FUNCTION OF THE NEM1-SPO7 COMPLEX</scope>
    <scope>DISRUPTION PHENOTYPE</scope>
</reference>
<accession>P38757</accession>
<accession>D3DKU7</accession>
<gene>
    <name type="primary">NEM1</name>
    <name type="ordered locus">YHR004C</name>
</gene>
<name>NEM1_YEAST</name>
<comment type="function">
    <text evidence="5 6 7">Catalytic component of the NEM1-SPO7 complex which acts as a phosphatase and dephosphorylates the phosphatidic acid phosphohydrolase PAH1 (PubMed:15889145). Essential for the formation of a spherical nucleus and meiotic division (PubMed:9822591). The NEM1-SPOo7 protein phosphatase is required for efficient mitophagy under prolonged respiration, as well as for reticulophagy and pexophagy (PubMed:29305265).</text>
</comment>
<comment type="catalytic activity">
    <reaction evidence="5">
        <text>O-phospho-L-seryl-[protein] + H2O = L-seryl-[protein] + phosphate</text>
        <dbReference type="Rhea" id="RHEA:20629"/>
        <dbReference type="Rhea" id="RHEA-COMP:9863"/>
        <dbReference type="Rhea" id="RHEA-COMP:11604"/>
        <dbReference type="ChEBI" id="CHEBI:15377"/>
        <dbReference type="ChEBI" id="CHEBI:29999"/>
        <dbReference type="ChEBI" id="CHEBI:43474"/>
        <dbReference type="ChEBI" id="CHEBI:83421"/>
        <dbReference type="EC" id="3.1.3.16"/>
    </reaction>
</comment>
<comment type="catalytic activity">
    <reaction evidence="5">
        <text>O-phospho-L-threonyl-[protein] + H2O = L-threonyl-[protein] + phosphate</text>
        <dbReference type="Rhea" id="RHEA:47004"/>
        <dbReference type="Rhea" id="RHEA-COMP:11060"/>
        <dbReference type="Rhea" id="RHEA-COMP:11605"/>
        <dbReference type="ChEBI" id="CHEBI:15377"/>
        <dbReference type="ChEBI" id="CHEBI:30013"/>
        <dbReference type="ChEBI" id="CHEBI:43474"/>
        <dbReference type="ChEBI" id="CHEBI:61977"/>
        <dbReference type="EC" id="3.1.3.16"/>
    </reaction>
</comment>
<comment type="subunit">
    <text evidence="7">Component of the NEM1-SPO7 complex.</text>
</comment>
<comment type="interaction">
    <interactant intactId="EBI-24435">
        <id>P38757</id>
    </interactant>
    <interactant intactId="EBI-17857">
        <id>P18410</id>
        <label>SPO7</label>
    </interactant>
    <organismsDiffer>false</organismsDiffer>
    <experiments>4</experiments>
</comment>
<comment type="subcellular location">
    <subcellularLocation>
        <location evidence="7">Endoplasmic reticulum membrane</location>
        <topology evidence="7">Single-pass membrane protein</topology>
    </subcellularLocation>
    <subcellularLocation>
        <location evidence="7">Nucleus membrane</location>
        <topology evidence="7">Single-pass membrane protein</topology>
    </subcellularLocation>
</comment>
<comment type="disruption phenotype">
    <text evidence="6">Leads to inefficient mitochondrial sequestration and degradation, as well as to defective reticulophagy and pexophagy (PubMed:29305265).</text>
</comment>
<comment type="miscellaneous">
    <text evidence="4">Present with 377 molecules/cell in log phase SD medium.</text>
</comment>
<comment type="similarity">
    <text evidence="8">Belongs to the Dullard family.</text>
</comment>
<organism>
    <name type="scientific">Saccharomyces cerevisiae (strain ATCC 204508 / S288c)</name>
    <name type="common">Baker's yeast</name>
    <dbReference type="NCBI Taxonomy" id="559292"/>
    <lineage>
        <taxon>Eukaryota</taxon>
        <taxon>Fungi</taxon>
        <taxon>Dikarya</taxon>
        <taxon>Ascomycota</taxon>
        <taxon>Saccharomycotina</taxon>
        <taxon>Saccharomycetes</taxon>
        <taxon>Saccharomycetales</taxon>
        <taxon>Saccharomycetaceae</taxon>
        <taxon>Saccharomyces</taxon>
    </lineage>
</organism>
<dbReference type="EC" id="3.1.3.16"/>
<dbReference type="EMBL" id="U10555">
    <property type="protein sequence ID" value="AAB68431.1"/>
    <property type="molecule type" value="Genomic_DNA"/>
</dbReference>
<dbReference type="EMBL" id="AY692950">
    <property type="protein sequence ID" value="AAT92969.1"/>
    <property type="molecule type" value="Genomic_DNA"/>
</dbReference>
<dbReference type="EMBL" id="BK006934">
    <property type="protein sequence ID" value="DAA06691.1"/>
    <property type="molecule type" value="Genomic_DNA"/>
</dbReference>
<dbReference type="PIR" id="S46802">
    <property type="entry name" value="S46802"/>
</dbReference>
<dbReference type="RefSeq" id="NP_011867.1">
    <property type="nucleotide sequence ID" value="NM_001179134.1"/>
</dbReference>
<dbReference type="SMR" id="P38757"/>
<dbReference type="BioGRID" id="36429">
    <property type="interactions" value="322"/>
</dbReference>
<dbReference type="ComplexPortal" id="CPX-1787">
    <property type="entry name" value="Nem1-Spo7 phosphatase complex"/>
</dbReference>
<dbReference type="DIP" id="DIP-2440N"/>
<dbReference type="FunCoup" id="P38757">
    <property type="interactions" value="64"/>
</dbReference>
<dbReference type="IntAct" id="P38757">
    <property type="interactions" value="6"/>
</dbReference>
<dbReference type="MINT" id="P38757"/>
<dbReference type="STRING" id="4932.YHR004C"/>
<dbReference type="iPTMnet" id="P38757"/>
<dbReference type="PaxDb" id="4932-YHR004C"/>
<dbReference type="PeptideAtlas" id="P38757"/>
<dbReference type="EnsemblFungi" id="YHR004C_mRNA">
    <property type="protein sequence ID" value="YHR004C"/>
    <property type="gene ID" value="YHR004C"/>
</dbReference>
<dbReference type="GeneID" id="856393"/>
<dbReference type="KEGG" id="sce:YHR004C"/>
<dbReference type="AGR" id="SGD:S000001046"/>
<dbReference type="SGD" id="S000001046">
    <property type="gene designation" value="NEM1"/>
</dbReference>
<dbReference type="VEuPathDB" id="FungiDB:YHR004C"/>
<dbReference type="eggNOG" id="KOG1605">
    <property type="taxonomic scope" value="Eukaryota"/>
</dbReference>
<dbReference type="GeneTree" id="ENSGT01040000240503"/>
<dbReference type="HOGENOM" id="CLU_020262_5_2_1"/>
<dbReference type="InParanoid" id="P38757"/>
<dbReference type="OMA" id="YAMHVDN"/>
<dbReference type="OrthoDB" id="277011at2759"/>
<dbReference type="BioCyc" id="YEAST:G3O-31069-MONOMER"/>
<dbReference type="BioGRID-ORCS" id="856393">
    <property type="hits" value="0 hits in 10 CRISPR screens"/>
</dbReference>
<dbReference type="PRO" id="PR:P38757"/>
<dbReference type="Proteomes" id="UP000002311">
    <property type="component" value="Chromosome VIII"/>
</dbReference>
<dbReference type="RNAct" id="P38757">
    <property type="molecule type" value="protein"/>
</dbReference>
<dbReference type="GO" id="GO:0005783">
    <property type="term" value="C:endoplasmic reticulum"/>
    <property type="evidence" value="ECO:0000314"/>
    <property type="project" value="SGD"/>
</dbReference>
<dbReference type="GO" id="GO:0005789">
    <property type="term" value="C:endoplasmic reticulum membrane"/>
    <property type="evidence" value="ECO:0007669"/>
    <property type="project" value="UniProtKB-SubCell"/>
</dbReference>
<dbReference type="GO" id="GO:0005811">
    <property type="term" value="C:lipid droplet"/>
    <property type="evidence" value="ECO:0000314"/>
    <property type="project" value="SGD"/>
</dbReference>
<dbReference type="GO" id="GO:0016020">
    <property type="term" value="C:membrane"/>
    <property type="evidence" value="ECO:0000314"/>
    <property type="project" value="SGD"/>
</dbReference>
<dbReference type="GO" id="GO:0005739">
    <property type="term" value="C:mitochondrion"/>
    <property type="evidence" value="ECO:0007005"/>
    <property type="project" value="SGD"/>
</dbReference>
<dbReference type="GO" id="GO:0071595">
    <property type="term" value="C:Nem1-Spo7 phosphatase complex"/>
    <property type="evidence" value="ECO:0000314"/>
    <property type="project" value="ComplexPortal"/>
</dbReference>
<dbReference type="GO" id="GO:0031965">
    <property type="term" value="C:nuclear membrane"/>
    <property type="evidence" value="ECO:0007669"/>
    <property type="project" value="UniProtKB-SubCell"/>
</dbReference>
<dbReference type="GO" id="GO:0004722">
    <property type="term" value="F:protein serine/threonine phosphatase activity"/>
    <property type="evidence" value="ECO:0000318"/>
    <property type="project" value="GO_Central"/>
</dbReference>
<dbReference type="GO" id="GO:0140042">
    <property type="term" value="P:lipid droplet formation"/>
    <property type="evidence" value="ECO:0000315"/>
    <property type="project" value="SGD"/>
</dbReference>
<dbReference type="GO" id="GO:0071072">
    <property type="term" value="P:negative regulation of phospholipid biosynthetic process"/>
    <property type="evidence" value="ECO:0000316"/>
    <property type="project" value="SGD"/>
</dbReference>
<dbReference type="GO" id="GO:0006998">
    <property type="term" value="P:nuclear envelope organization"/>
    <property type="evidence" value="ECO:0000314"/>
    <property type="project" value="ComplexPortal"/>
</dbReference>
<dbReference type="GO" id="GO:0046889">
    <property type="term" value="P:positive regulation of lipid biosynthetic process"/>
    <property type="evidence" value="ECO:0000315"/>
    <property type="project" value="SGD"/>
</dbReference>
<dbReference type="GO" id="GO:0071071">
    <property type="term" value="P:regulation of phospholipid biosynthetic process"/>
    <property type="evidence" value="ECO:0000315"/>
    <property type="project" value="SGD"/>
</dbReference>
<dbReference type="CDD" id="cd07521">
    <property type="entry name" value="HAD_FCP1-like"/>
    <property type="match status" value="1"/>
</dbReference>
<dbReference type="FunFam" id="3.40.50.1000:FF:000199">
    <property type="entry name" value="Nuclear envelope morphology"/>
    <property type="match status" value="1"/>
</dbReference>
<dbReference type="Gene3D" id="3.40.50.1000">
    <property type="entry name" value="HAD superfamily/HAD-like"/>
    <property type="match status" value="1"/>
</dbReference>
<dbReference type="InterPro" id="IPR011948">
    <property type="entry name" value="Dullard_phosphatase"/>
</dbReference>
<dbReference type="InterPro" id="IPR004274">
    <property type="entry name" value="FCP1_dom"/>
</dbReference>
<dbReference type="InterPro" id="IPR036412">
    <property type="entry name" value="HAD-like_sf"/>
</dbReference>
<dbReference type="InterPro" id="IPR023214">
    <property type="entry name" value="HAD_sf"/>
</dbReference>
<dbReference type="InterPro" id="IPR050365">
    <property type="entry name" value="TIM50"/>
</dbReference>
<dbReference type="NCBIfam" id="TIGR02251">
    <property type="entry name" value="HIF-SF_euk"/>
    <property type="match status" value="1"/>
</dbReference>
<dbReference type="PANTHER" id="PTHR12210">
    <property type="entry name" value="DULLARD PROTEIN PHOSPHATASE"/>
    <property type="match status" value="1"/>
</dbReference>
<dbReference type="Pfam" id="PF03031">
    <property type="entry name" value="NIF"/>
    <property type="match status" value="1"/>
</dbReference>
<dbReference type="SMART" id="SM00577">
    <property type="entry name" value="CPDc"/>
    <property type="match status" value="1"/>
</dbReference>
<dbReference type="SUPFAM" id="SSF56784">
    <property type="entry name" value="HAD-like"/>
    <property type="match status" value="1"/>
</dbReference>
<dbReference type="PROSITE" id="PS50969">
    <property type="entry name" value="FCP1"/>
    <property type="match status" value="1"/>
</dbReference>
<proteinExistence type="evidence at protein level"/>
<evidence type="ECO:0000255" key="1"/>
<evidence type="ECO:0000255" key="2">
    <source>
        <dbReference type="PROSITE-ProRule" id="PRU00336"/>
    </source>
</evidence>
<evidence type="ECO:0000256" key="3">
    <source>
        <dbReference type="SAM" id="MobiDB-lite"/>
    </source>
</evidence>
<evidence type="ECO:0000269" key="4">
    <source>
    </source>
</evidence>
<evidence type="ECO:0000269" key="5">
    <source>
    </source>
</evidence>
<evidence type="ECO:0000269" key="6">
    <source>
    </source>
</evidence>
<evidence type="ECO:0000269" key="7">
    <source>
    </source>
</evidence>
<evidence type="ECO:0000305" key="8"/>
<keyword id="KW-0256">Endoplasmic reticulum</keyword>
<keyword id="KW-0378">Hydrolase</keyword>
<keyword id="KW-0472">Membrane</keyword>
<keyword id="KW-0539">Nucleus</keyword>
<keyword id="KW-0904">Protein phosphatase</keyword>
<keyword id="KW-1185">Reference proteome</keyword>
<keyword id="KW-0812">Transmembrane</keyword>
<keyword id="KW-1133">Transmembrane helix</keyword>